<sequence>MATHTISRSILCRPAKSLSFLFTRSFASSAPLAKSPASSLLSRSRPLVAAFSSVFRGGLVSVKGLSTQATSSSLNDPNPNWSNRPPKETILLDGCDFEHWLVVVEPPQGEPTRDEIIDSYIKTLAQIVGSEDEARMKIYSVSTRCYYAFGALVSEDLSHKLKELSNVRWVLPDSYLDVRNKDYGGEPFIDGKAVPYDPKYHEEWIRNNARANERNRRNDRPRNNDRSRNFERRRENMAGGPPPQRPPMGGPPPPPHIGGSAPPPPHMGGSAPPPPHMGQNYGPPPPNNMGGPRHPPPYGAPPQNNMGGPRPPQNYGGTPPPNYGGAPPANNMGGAPPPNYGGGPPPQYGAVPPPQYGGAPPQNNNYQQQGSGMQQPQYQNNYPPNRDGSGNPYQG</sequence>
<name>MORF8_ARATH</name>
<comment type="function">
    <text evidence="5 7">Involved in organellar RNA editing. Required for the processing of numerous RNA editing sites in mitochondria and plastids (PubMed:22566615, PubMed:23818871). Binds to the plastid RARE1 factor, a pentatricopeptide repeat-containing protein involved in RNA editing (PubMed:22566615).</text>
</comment>
<comment type="subunit">
    <text evidence="6 8 9 10 11 12 13 14 15">Interacts with protoporphyrinogen oxidase 1 PPOX1 (PubMed:24497494). Interacts with PCMP-H52/MEF10 (PubMed:23288601). Homodimer and heterodimers with MORF1/RIP8, MORF2/RIP2, MORF3/RIP3, MORF4/RIP4, MORF5/RIP5, MORF6/RIP6 and MORF7/RIP7 (PubMed:25583991). Interacts with RBG3/ORRM3 (PubMed:25800738). Interacts with PCMP-A2/PMD1 (PubMed:26123918). Interacts with ORRM1 and VAT3/OZ1 (PubMed:25768119). Interacts with PCMP-H13/MEF35 (PubMed:26470017). Interacts with RBG5/ORRM4 (PubMed:26578708). Interacts with ORRM6 (PubMed:28213559).</text>
</comment>
<comment type="interaction">
    <interactant intactId="EBI-2025869">
        <id>Q9LKA5</id>
    </interactant>
    <interactant intactId="EBI-2025736">
        <id>Q9LFT8</id>
        <label>CDKC-1</label>
    </interactant>
    <organismsDiffer>false</organismsDiffer>
    <experiments>2</experiments>
</comment>
<comment type="subcellular location">
    <subcellularLocation>
        <location evidence="3 4 5 9 14">Mitochondrion</location>
    </subcellularLocation>
    <subcellularLocation>
        <location evidence="5 9 15">Plastid</location>
        <location evidence="5 9 15">Chloroplast</location>
    </subcellularLocation>
    <text evidence="5 9">Dual targeting to mitochondria and chloroplasts.</text>
</comment>
<comment type="disruption phenotype">
    <text evidence="5 7">Dwarf plants.</text>
</comment>
<comment type="similarity">
    <text>Belongs to the MORF family.</text>
</comment>
<protein>
    <recommendedName>
        <fullName evidence="18">Multiple organellar RNA editing factor 8, chloroplastic/mitochondrial</fullName>
    </recommendedName>
    <alternativeName>
        <fullName evidence="17">RNA editing-interacting protein 1</fullName>
    </alternativeName>
</protein>
<keyword id="KW-0150">Chloroplast</keyword>
<keyword id="KW-0903">Direct protein sequencing</keyword>
<keyword id="KW-0496">Mitochondrion</keyword>
<keyword id="KW-0507">mRNA processing</keyword>
<keyword id="KW-0934">Plastid</keyword>
<keyword id="KW-1185">Reference proteome</keyword>
<keyword id="KW-0809">Transit peptide</keyword>
<gene>
    <name evidence="16" type="primary">MORF8</name>
    <name evidence="17" type="synonym">RIP1</name>
    <name type="ordered locus">At3g15000</name>
    <name type="ORF">K15M2.14</name>
</gene>
<proteinExistence type="evidence at protein level"/>
<reference evidence="18" key="1">
    <citation type="journal article" date="2000" name="DNA Res.">
        <title>Structural analysis of Arabidopsis thaliana chromosome 3. II. Sequence features of the 4,251,695 bp regions covered by 90 P1, TAC and BAC clones.</title>
        <authorList>
            <person name="Kaneko T."/>
            <person name="Katoh T."/>
            <person name="Sato S."/>
            <person name="Nakamura Y."/>
            <person name="Asamizu E."/>
            <person name="Tabata S."/>
        </authorList>
    </citation>
    <scope>NUCLEOTIDE SEQUENCE [LARGE SCALE GENOMIC DNA]</scope>
    <source>
        <strain>cv. Columbia</strain>
    </source>
</reference>
<reference evidence="18" key="2">
    <citation type="journal article" date="2017" name="Plant J.">
        <title>Araport11: a complete reannotation of the Arabidopsis thaliana reference genome.</title>
        <authorList>
            <person name="Cheng C.Y."/>
            <person name="Krishnakumar V."/>
            <person name="Chan A.P."/>
            <person name="Thibaud-Nissen F."/>
            <person name="Schobel S."/>
            <person name="Town C.D."/>
        </authorList>
    </citation>
    <scope>GENOME REANNOTATION</scope>
    <source>
        <strain>cv. Columbia</strain>
    </source>
</reference>
<reference key="3">
    <citation type="journal article" date="2003" name="Science">
        <title>Empirical analysis of transcriptional activity in the Arabidopsis genome.</title>
        <authorList>
            <person name="Yamada K."/>
            <person name="Lim J."/>
            <person name="Dale J.M."/>
            <person name="Chen H."/>
            <person name="Shinn P."/>
            <person name="Palm C.J."/>
            <person name="Southwick A.M."/>
            <person name="Wu H.C."/>
            <person name="Kim C.J."/>
            <person name="Nguyen M."/>
            <person name="Pham P.K."/>
            <person name="Cheuk R.F."/>
            <person name="Karlin-Newmann G."/>
            <person name="Liu S.X."/>
            <person name="Lam B."/>
            <person name="Sakano H."/>
            <person name="Wu T."/>
            <person name="Yu G."/>
            <person name="Miranda M."/>
            <person name="Quach H.L."/>
            <person name="Tripp M."/>
            <person name="Chang C.H."/>
            <person name="Lee J.M."/>
            <person name="Toriumi M.J."/>
            <person name="Chan M.M."/>
            <person name="Tang C.C."/>
            <person name="Onodera C.S."/>
            <person name="Deng J.M."/>
            <person name="Akiyama K."/>
            <person name="Ansari Y."/>
            <person name="Arakawa T."/>
            <person name="Banh J."/>
            <person name="Banno F."/>
            <person name="Bowser L."/>
            <person name="Brooks S.Y."/>
            <person name="Carninci P."/>
            <person name="Chao Q."/>
            <person name="Choy N."/>
            <person name="Enju A."/>
            <person name="Goldsmith A.D."/>
            <person name="Gurjal M."/>
            <person name="Hansen N.F."/>
            <person name="Hayashizaki Y."/>
            <person name="Johnson-Hopson C."/>
            <person name="Hsuan V.W."/>
            <person name="Iida K."/>
            <person name="Karnes M."/>
            <person name="Khan S."/>
            <person name="Koesema E."/>
            <person name="Ishida J."/>
            <person name="Jiang P.X."/>
            <person name="Jones T."/>
            <person name="Kawai J."/>
            <person name="Kamiya A."/>
            <person name="Meyers C."/>
            <person name="Nakajima M."/>
            <person name="Narusaka M."/>
            <person name="Seki M."/>
            <person name="Sakurai T."/>
            <person name="Satou M."/>
            <person name="Tamse R."/>
            <person name="Vaysberg M."/>
            <person name="Wallender E.K."/>
            <person name="Wong C."/>
            <person name="Yamamura Y."/>
            <person name="Yuan S."/>
            <person name="Shinozaki K."/>
            <person name="Davis R.W."/>
            <person name="Theologis A."/>
            <person name="Ecker J.R."/>
        </authorList>
    </citation>
    <scope>NUCLEOTIDE SEQUENCE [LARGE SCALE MRNA]</scope>
    <source>
        <strain>cv. Columbia</strain>
    </source>
</reference>
<reference key="4">
    <citation type="submission" date="2004-10" db="EMBL/GenBank/DDBJ databases">
        <title>Arabidopsis ORF clones.</title>
        <authorList>
            <person name="Kim C.J."/>
            <person name="Chen H."/>
            <person name="Cheuk R.F."/>
            <person name="Shinn P."/>
            <person name="Ecker J.R."/>
        </authorList>
    </citation>
    <scope>NUCLEOTIDE SEQUENCE [MRNA]</scope>
</reference>
<reference key="5">
    <citation type="submission" date="2006-07" db="EMBL/GenBank/DDBJ databases">
        <title>Large-scale analysis of RIKEN Arabidopsis full-length (RAFL) cDNAs.</title>
        <authorList>
            <person name="Totoki Y."/>
            <person name="Seki M."/>
            <person name="Ishida J."/>
            <person name="Nakajima M."/>
            <person name="Enju A."/>
            <person name="Kamiya A."/>
            <person name="Narusaka M."/>
            <person name="Shin-i T."/>
            <person name="Nakagawa M."/>
            <person name="Sakamoto N."/>
            <person name="Oishi K."/>
            <person name="Kohara Y."/>
            <person name="Kobayashi M."/>
            <person name="Toyoda A."/>
            <person name="Sakaki Y."/>
            <person name="Sakurai T."/>
            <person name="Iida K."/>
            <person name="Akiyama K."/>
            <person name="Satou M."/>
            <person name="Toyoda T."/>
            <person name="Konagaya A."/>
            <person name="Carninci P."/>
            <person name="Kawai J."/>
            <person name="Hayashizaki Y."/>
            <person name="Shinozaki K."/>
        </authorList>
    </citation>
    <scope>NUCLEOTIDE SEQUENCE [LARGE SCALE MRNA]</scope>
    <source>
        <strain>cv. Columbia</strain>
    </source>
</reference>
<reference evidence="18" key="6">
    <citation type="journal article" date="2001" name="Plant Physiol.">
        <title>Proteomic approach to identify novel mitochondrial proteins in Arabidopsis.</title>
        <authorList>
            <person name="Kruft V."/>
            <person name="Eubel H."/>
            <person name="Jaensch L."/>
            <person name="Werhahn W."/>
            <person name="Braun H.-P."/>
        </authorList>
    </citation>
    <scope>PROTEIN SEQUENCE OF 169-179</scope>
    <scope>SUBCELLULAR LOCATION</scope>
    <source>
        <tissue>Leaf</tissue>
        <tissue>Stem</tissue>
    </source>
</reference>
<reference key="7">
    <citation type="journal article" date="2004" name="Plant Cell">
        <title>Experimental analysis of the Arabidopsis mitochondrial proteome highlights signaling and regulatory components, provides assessment of targeting prediction programs, and indicates plant-specific mitochondrial proteins.</title>
        <authorList>
            <person name="Heazlewood J.L."/>
            <person name="Tonti-Filippini J.S."/>
            <person name="Gout A.M."/>
            <person name="Day D.A."/>
            <person name="Whelan J."/>
            <person name="Millar A.H."/>
        </authorList>
    </citation>
    <scope>IDENTIFICATION BY MASS SPECTROMETRY</scope>
    <scope>SUBCELLULAR LOCATION [LARGE SCALE ANALYSIS]</scope>
    <source>
        <strain>cv. Landsberg erecta</strain>
    </source>
</reference>
<reference key="8">
    <citation type="journal article" date="2012" name="Proc. Natl. Acad. Sci. U.S.A.">
        <title>Multiple organellar RNA editing factor (MORF) family proteins are required for RNA editing in mitochondria and plastids of plants.</title>
        <authorList>
            <person name="Takenaka M."/>
            <person name="Zehrmann A."/>
            <person name="Verbitskiy D."/>
            <person name="Kugelmann M."/>
            <person name="Hartel B."/>
            <person name="Brennicke A."/>
        </authorList>
    </citation>
    <scope>GENE FAMILY</scope>
    <scope>NOMENCLATURE</scope>
</reference>
<reference key="9">
    <citation type="journal article" date="2012" name="Proc. Natl. Acad. Sci. U.S.A.">
        <title>RIP1, a member of an Arabidopsis protein family, interacts with the protein RARE1 and broadly affects RNA editing.</title>
        <authorList>
            <person name="Bentolila S."/>
            <person name="Heller W.P."/>
            <person name="Sun T."/>
            <person name="Babina A.M."/>
            <person name="Friso G."/>
            <person name="van Wijk K.J."/>
            <person name="Hanson M.R."/>
        </authorList>
    </citation>
    <scope>FUNCTION</scope>
    <scope>SUBCELLULAR LOCATION</scope>
    <scope>DISRUPTION PHENOTYPE</scope>
</reference>
<reference key="10">
    <citation type="journal article" date="2013" name="Plant Mol. Biol.">
        <title>MEF10 is required for RNA editing at nad2-842 in mitochondria of Arabidopsis thaliana and interacts with MORF8.</title>
        <authorList>
            <person name="Haertel B."/>
            <person name="Zehrmann A."/>
            <person name="Verbitskiy D."/>
            <person name="van der Merwe J.A."/>
            <person name="Brennicke A."/>
            <person name="Takenaka M."/>
        </authorList>
    </citation>
    <scope>INTERACTION WITH PCMP-H52/MEF10</scope>
</reference>
<reference key="11">
    <citation type="journal article" date="2013" name="PLoS Genet.">
        <title>Comprehensive high-resolution analysis of the role of an Arabidopsis gene family in RNA editing.</title>
        <authorList>
            <person name="Bentolila S."/>
            <person name="Oh J."/>
            <person name="Hanson M.R."/>
            <person name="Bukowski R."/>
        </authorList>
    </citation>
    <scope>FUNCTION</scope>
    <scope>DISRUPTION PHENOTYPE</scope>
</reference>
<reference key="12">
    <citation type="journal article" date="2014" name="Proc. Natl. Acad. Sci. U.S.A.">
        <title>Tetrapyrrole biosynthetic enzyme protoporphyrinogen IX oxidase 1 is required for plastid RNA editing.</title>
        <authorList>
            <person name="Zhang F."/>
            <person name="Tang W."/>
            <person name="Hedtke B."/>
            <person name="Zhong L."/>
            <person name="Liu L."/>
            <person name="Peng L."/>
            <person name="Lu C."/>
            <person name="Grimm B."/>
            <person name="Lin R."/>
        </authorList>
    </citation>
    <scope>INTERACTION WITH PPOX1</scope>
</reference>
<reference key="13">
    <citation type="journal article" date="2015" name="J. Biol. Chem.">
        <title>Selective homo- and heteromer interactions between the multiple organellar RNA editing factor (MORF) proteins in Arabidopsis thaliana.</title>
        <authorList>
            <person name="Zehrmann A."/>
            <person name="Haertel B."/>
            <person name="Glass F."/>
            <person name="Bayer-Csaszar E."/>
            <person name="Obata T."/>
            <person name="Meyer E."/>
            <person name="Brennicke A."/>
            <person name="Takenaka M."/>
        </authorList>
    </citation>
    <scope>IDENTIFICATION BY MASS SPECTROMETRY</scope>
    <scope>HOMODIMERIZATION</scope>
    <scope>INTERACTION WITH MORF1/RIP8; MORF2/RIP2; MORF3/RIP3; MORF4/RIP4; MORF5/RIP5; MORF6/RIP6 AND MORF7/RIP7</scope>
    <scope>SUBCELLULAR LOCATION</scope>
</reference>
<reference key="14">
    <citation type="journal article" date="2015" name="Nucleic Acids Res.">
        <title>Two RNA recognition motif-containing proteins are plant mitochondrial editing factors.</title>
        <authorList>
            <person name="Shi X."/>
            <person name="Hanson M.R."/>
            <person name="Bentolila S."/>
        </authorList>
    </citation>
    <scope>INTERACTION WITH RBG3/ORRM3</scope>
</reference>
<reference key="15">
    <citation type="journal article" date="2015" name="Photosyn. Res.">
        <title>PPR protein PDM1/SEL1 is involved in RNA editing and splicing of plastid genes in Arabidopsis thaliana.</title>
        <authorList>
            <person name="Zhang H.D."/>
            <person name="Cui Y.L."/>
            <person name="Huang C."/>
            <person name="Yin Q.Q."/>
            <person name="Qin X.M."/>
            <person name="Xu T."/>
            <person name="He X.F."/>
            <person name="Zhang Y."/>
            <person name="Li Z.R."/>
            <person name="Yang Z.N."/>
        </authorList>
    </citation>
    <scope>INTERACTION WITH PCMP-A2/PMD1</scope>
</reference>
<reference key="16">
    <citation type="journal article" date="2015" name="PLoS Genet.">
        <title>A zinc finger motif-containing protein is essential for chloroplast RNA editing.</title>
        <authorList>
            <person name="Sun T."/>
            <person name="Shi X."/>
            <person name="Friso G."/>
            <person name="Van Wijk K."/>
            <person name="Bentolila S."/>
            <person name="Hanson M.R."/>
        </authorList>
    </citation>
    <scope>INTERACTION WITH ORRM1 AND VAT3/OZ1</scope>
</reference>
<reference key="17">
    <citation type="journal article" date="2015" name="PLoS ONE">
        <title>The DYW subgroup PPR protein MEF35 targets RNA editing sites in the mitochondrial rpl16, nad4 and cob mRNAs in Arabidopsis thaliana.</title>
        <authorList>
            <person name="Brehme N."/>
            <person name="Bayer-Csaszar E."/>
            <person name="Glass F."/>
            <person name="Takenaka M."/>
        </authorList>
    </citation>
    <scope>INTERACTION WITH PCMP-H13/MEF35</scope>
</reference>
<reference key="18">
    <citation type="journal article" date="2016" name="Plant Physiol.">
        <title>RNA recognition motif-containing protein ORRM4 broadly affects mitochondrial RNA editing and impacts plant development and flowering.</title>
        <authorList>
            <person name="Shi X."/>
            <person name="Germain A."/>
            <person name="Hanson M.R."/>
            <person name="Bentolila S."/>
        </authorList>
    </citation>
    <scope>INTERACTION WITH RBG5/ORRM4</scope>
    <scope>SUBCELLULAR LOCATION</scope>
</reference>
<reference key="19">
    <citation type="journal article" date="2017" name="Plant Physiol.">
        <title>An organelle RNA recognition motif protein is required for photosynthetic subunit psbF transcript editing.</title>
        <authorList>
            <person name="Hackett J.B."/>
            <person name="Shi X."/>
            <person name="Kobylarz A.T."/>
            <person name="Lucas M.K."/>
            <person name="Wessendorf R.L."/>
            <person name="Hines K.M."/>
            <person name="Bentolila S."/>
            <person name="Hanson M.R."/>
            <person name="Lu Y."/>
        </authorList>
    </citation>
    <scope>INTERACTION WITH ORRM6</scope>
    <scope>SUBCELLULAR LOCATION</scope>
</reference>
<organism>
    <name type="scientific">Arabidopsis thaliana</name>
    <name type="common">Mouse-ear cress</name>
    <dbReference type="NCBI Taxonomy" id="3702"/>
    <lineage>
        <taxon>Eukaryota</taxon>
        <taxon>Viridiplantae</taxon>
        <taxon>Streptophyta</taxon>
        <taxon>Embryophyta</taxon>
        <taxon>Tracheophyta</taxon>
        <taxon>Spermatophyta</taxon>
        <taxon>Magnoliopsida</taxon>
        <taxon>eudicotyledons</taxon>
        <taxon>Gunneridae</taxon>
        <taxon>Pentapetalae</taxon>
        <taxon>rosids</taxon>
        <taxon>malvids</taxon>
        <taxon>Brassicales</taxon>
        <taxon>Brassicaceae</taxon>
        <taxon>Camelineae</taxon>
        <taxon>Arabidopsis</taxon>
    </lineage>
</organism>
<accession>Q9LKA5</accession>
<accession>Q5XEU8</accession>
<feature type="transit peptide" description="Chloroplast and mitochondrion">
    <location>
        <begin position="1"/>
        <end position="56"/>
    </location>
</feature>
<feature type="chain" id="PRO_0000220586" description="Multiple organellar RNA editing factor 8, chloroplastic/mitochondrial" evidence="1">
    <location>
        <begin position="57"/>
        <end position="395"/>
    </location>
</feature>
<feature type="region of interest" description="Disordered" evidence="2">
    <location>
        <begin position="211"/>
        <end position="395"/>
    </location>
</feature>
<feature type="compositionally biased region" description="Basic and acidic residues" evidence="2">
    <location>
        <begin position="211"/>
        <end position="236"/>
    </location>
</feature>
<feature type="compositionally biased region" description="Pro residues" evidence="2">
    <location>
        <begin position="240"/>
        <end position="300"/>
    </location>
</feature>
<feature type="compositionally biased region" description="Low complexity" evidence="2">
    <location>
        <begin position="313"/>
        <end position="334"/>
    </location>
</feature>
<feature type="compositionally biased region" description="Pro residues" evidence="2">
    <location>
        <begin position="335"/>
        <end position="355"/>
    </location>
</feature>
<feature type="compositionally biased region" description="Low complexity" evidence="2">
    <location>
        <begin position="356"/>
        <end position="385"/>
    </location>
</feature>
<dbReference type="EMBL" id="AP000370">
    <property type="protein sequence ID" value="BAA97063.1"/>
    <property type="molecule type" value="Genomic_DNA"/>
</dbReference>
<dbReference type="EMBL" id="CP002686">
    <property type="protein sequence ID" value="AEE75601.1"/>
    <property type="molecule type" value="Genomic_DNA"/>
</dbReference>
<dbReference type="EMBL" id="AF428427">
    <property type="protein sequence ID" value="AAL16196.1"/>
    <property type="molecule type" value="mRNA"/>
</dbReference>
<dbReference type="EMBL" id="BT015868">
    <property type="protein sequence ID" value="AAU94431.1"/>
    <property type="molecule type" value="mRNA"/>
</dbReference>
<dbReference type="EMBL" id="AK226420">
    <property type="protein sequence ID" value="BAE98564.1"/>
    <property type="molecule type" value="mRNA"/>
</dbReference>
<dbReference type="RefSeq" id="NP_566496.1">
    <property type="nucleotide sequence ID" value="NM_112362.4"/>
</dbReference>
<dbReference type="SMR" id="Q9LKA5"/>
<dbReference type="BioGRID" id="6063">
    <property type="interactions" value="16"/>
</dbReference>
<dbReference type="FunCoup" id="Q9LKA5">
    <property type="interactions" value="502"/>
</dbReference>
<dbReference type="IntAct" id="Q9LKA5">
    <property type="interactions" value="5"/>
</dbReference>
<dbReference type="STRING" id="3702.Q9LKA5"/>
<dbReference type="MetOSite" id="Q9LKA5"/>
<dbReference type="SwissPalm" id="Q9LKA5"/>
<dbReference type="PaxDb" id="3702-AT3G15000.1"/>
<dbReference type="ProteomicsDB" id="250938"/>
<dbReference type="EnsemblPlants" id="AT3G15000.1">
    <property type="protein sequence ID" value="AT3G15000.1"/>
    <property type="gene ID" value="AT3G15000"/>
</dbReference>
<dbReference type="GeneID" id="820729"/>
<dbReference type="Gramene" id="AT3G15000.1">
    <property type="protein sequence ID" value="AT3G15000.1"/>
    <property type="gene ID" value="AT3G15000"/>
</dbReference>
<dbReference type="KEGG" id="ath:AT3G15000"/>
<dbReference type="Araport" id="AT3G15000"/>
<dbReference type="TAIR" id="AT3G15000">
    <property type="gene designation" value="RIP1"/>
</dbReference>
<dbReference type="eggNOG" id="ENOG502QS63">
    <property type="taxonomic scope" value="Eukaryota"/>
</dbReference>
<dbReference type="HOGENOM" id="CLU_046201_0_0_1"/>
<dbReference type="InParanoid" id="Q9LKA5"/>
<dbReference type="OMA" id="HAGGMQQ"/>
<dbReference type="OrthoDB" id="1913091at2759"/>
<dbReference type="PhylomeDB" id="Q9LKA5"/>
<dbReference type="CD-CODE" id="4299E36E">
    <property type="entry name" value="Nucleolus"/>
</dbReference>
<dbReference type="PRO" id="PR:Q9LKA5"/>
<dbReference type="Proteomes" id="UP000006548">
    <property type="component" value="Chromosome 3"/>
</dbReference>
<dbReference type="ExpressionAtlas" id="Q9LKA5">
    <property type="expression patterns" value="baseline and differential"/>
</dbReference>
<dbReference type="GO" id="GO:0009507">
    <property type="term" value="C:chloroplast"/>
    <property type="evidence" value="ECO:0000314"/>
    <property type="project" value="TAIR"/>
</dbReference>
<dbReference type="GO" id="GO:0005829">
    <property type="term" value="C:cytosol"/>
    <property type="evidence" value="ECO:0007005"/>
    <property type="project" value="TAIR"/>
</dbReference>
<dbReference type="GO" id="GO:0005739">
    <property type="term" value="C:mitochondrion"/>
    <property type="evidence" value="ECO:0000314"/>
    <property type="project" value="TAIR"/>
</dbReference>
<dbReference type="GO" id="GO:0050897">
    <property type="term" value="F:cobalt ion binding"/>
    <property type="evidence" value="ECO:0007005"/>
    <property type="project" value="TAIR"/>
</dbReference>
<dbReference type="GO" id="GO:0003729">
    <property type="term" value="F:mRNA binding"/>
    <property type="evidence" value="ECO:0000314"/>
    <property type="project" value="TAIR"/>
</dbReference>
<dbReference type="GO" id="GO:0046983">
    <property type="term" value="F:protein dimerization activity"/>
    <property type="evidence" value="ECO:0000353"/>
    <property type="project" value="TAIR"/>
</dbReference>
<dbReference type="GO" id="GO:0042803">
    <property type="term" value="F:protein homodimerization activity"/>
    <property type="evidence" value="ECO:0000353"/>
    <property type="project" value="TAIR"/>
</dbReference>
<dbReference type="GO" id="GO:0016554">
    <property type="term" value="P:cytidine to uridine editing"/>
    <property type="evidence" value="ECO:0000315"/>
    <property type="project" value="TAIR"/>
</dbReference>
<dbReference type="GO" id="GO:0080156">
    <property type="term" value="P:mitochondrial mRNA modification"/>
    <property type="evidence" value="ECO:0000315"/>
    <property type="project" value="TAIR"/>
</dbReference>
<dbReference type="GO" id="GO:0006397">
    <property type="term" value="P:mRNA processing"/>
    <property type="evidence" value="ECO:0007669"/>
    <property type="project" value="UniProtKB-KW"/>
</dbReference>
<dbReference type="GO" id="GO:0009451">
    <property type="term" value="P:RNA modification"/>
    <property type="evidence" value="ECO:0000315"/>
    <property type="project" value="TAIR"/>
</dbReference>
<dbReference type="InterPro" id="IPR039206">
    <property type="entry name" value="MORF/ORRM1/DAG-like"/>
</dbReference>
<dbReference type="InterPro" id="IPR054059">
    <property type="entry name" value="MORF/ORRM1/DAG-like_MORF"/>
</dbReference>
<dbReference type="PANTHER" id="PTHR31346">
    <property type="entry name" value="MULTIPLE ORGANELLAR RNA EDITING FACTOR 2, CHLOROPLASTIC-RELATED-RELATED"/>
    <property type="match status" value="1"/>
</dbReference>
<dbReference type="PANTHER" id="PTHR31346:SF4">
    <property type="entry name" value="MULTIPLE ORGANELLAR RNA EDITING FACTOR 8, CHLOROPLASTIC_MITOCHONDRIAL"/>
    <property type="match status" value="1"/>
</dbReference>
<dbReference type="Pfam" id="PF21864">
    <property type="entry name" value="MORF_dom"/>
    <property type="match status" value="1"/>
</dbReference>
<evidence type="ECO:0000255" key="1"/>
<evidence type="ECO:0000256" key="2">
    <source>
        <dbReference type="SAM" id="MobiDB-lite"/>
    </source>
</evidence>
<evidence type="ECO:0000269" key="3">
    <source>
    </source>
</evidence>
<evidence type="ECO:0000269" key="4">
    <source>
    </source>
</evidence>
<evidence type="ECO:0000269" key="5">
    <source>
    </source>
</evidence>
<evidence type="ECO:0000269" key="6">
    <source>
    </source>
</evidence>
<evidence type="ECO:0000269" key="7">
    <source>
    </source>
</evidence>
<evidence type="ECO:0000269" key="8">
    <source>
    </source>
</evidence>
<evidence type="ECO:0000269" key="9">
    <source>
    </source>
</evidence>
<evidence type="ECO:0000269" key="10">
    <source>
    </source>
</evidence>
<evidence type="ECO:0000269" key="11">
    <source>
    </source>
</evidence>
<evidence type="ECO:0000269" key="12">
    <source>
    </source>
</evidence>
<evidence type="ECO:0000269" key="13">
    <source>
    </source>
</evidence>
<evidence type="ECO:0000269" key="14">
    <source>
    </source>
</evidence>
<evidence type="ECO:0000269" key="15">
    <source>
    </source>
</evidence>
<evidence type="ECO:0000303" key="16">
    <source>
    </source>
</evidence>
<evidence type="ECO:0000303" key="17">
    <source>
    </source>
</evidence>
<evidence type="ECO:0000305" key="18"/>